<proteinExistence type="predicted"/>
<reference key="1">
    <citation type="journal article" date="1998" name="Arch. Virol.">
        <title>Rice ragged stunt oryzavirus genome segment S4 could encode an RNA dependent RNA polymerase and a second protein of unknown function.</title>
        <authorList>
            <person name="Upadhyaya N.M."/>
            <person name="Ramm K."/>
            <person name="Gellatly J.A."/>
            <person name="Li Z."/>
            <person name="Kositratana W."/>
            <person name="Waterhouse P.M."/>
        </authorList>
    </citation>
    <scope>NUCLEOTIDE SEQUENCE [GENOMIC RNA]</scope>
</reference>
<organismHost>
    <name type="scientific">Oryza latifolia</name>
    <dbReference type="NCBI Taxonomy" id="4534"/>
</organismHost>
<organismHost>
    <name type="scientific">Oryza nivara</name>
    <name type="common">Indian wild rice</name>
    <name type="synonym">Oryza sativa f. spontanea</name>
    <dbReference type="NCBI Taxonomy" id="4536"/>
</organismHost>
<organismHost>
    <name type="scientific">Oryza rufipogon</name>
    <name type="common">Brownbeard rice</name>
    <name type="synonym">Asian wild rice</name>
    <dbReference type="NCBI Taxonomy" id="4529"/>
</organismHost>
<feature type="chain" id="PRO_0000403636" description="Uncharacterized protein VP4b">
    <location>
        <begin position="1"/>
        <end position="326"/>
    </location>
</feature>
<feature type="region of interest" description="Disordered" evidence="1">
    <location>
        <begin position="293"/>
        <end position="326"/>
    </location>
</feature>
<evidence type="ECO:0000256" key="1">
    <source>
        <dbReference type="SAM" id="MobiDB-lite"/>
    </source>
</evidence>
<keyword id="KW-1185">Reference proteome</keyword>
<name>VP4B_RRSVT</name>
<accession>O92605</accession>
<protein>
    <recommendedName>
        <fullName>Uncharacterized protein VP4b</fullName>
    </recommendedName>
</protein>
<dbReference type="EMBL" id="U66714">
    <property type="protein sequence ID" value="AAC36457.1"/>
    <property type="molecule type" value="Genomic_RNA"/>
</dbReference>
<dbReference type="RefSeq" id="NP_620542.1">
    <property type="nucleotide sequence ID" value="NC_003771.1"/>
</dbReference>
<dbReference type="GeneID" id="991205"/>
<dbReference type="KEGG" id="vg:991205"/>
<dbReference type="Proteomes" id="UP000000348">
    <property type="component" value="Genome"/>
</dbReference>
<sequence>MPSVRASDPKQQLYPIAELEQLSQEDVRNIAKTHRSPTLLRTQTKFCVGRRGELSYDTTLAPLQYSEPGDSILRGSDKQDGNDSSLSILSRLWCYGVSRRKAQASEIDSELVARGISKVLEDSHAKLDGFGSHQLYDSQTYNDYYSRSAGNQISERGEGGERSNLFIAVHKPRHPQSYQPVSDPSVLAGYESVRERRDVFRFGGGTNFEQGGSTENRGNYSEIPELTLLNYEQGTHSSLITERDGYKFWSGMSICETIYTATRDEIEEYELSRGIHSVPNIIELRQRLRRRSHRNYDANHSTSGEEENSGSRSRIAELSQSTIHRR</sequence>
<organism>
    <name type="scientific">Rice ragged stunt virus (isolate Thailand)</name>
    <name type="common">RRSV</name>
    <dbReference type="NCBI Taxonomy" id="649603"/>
    <lineage>
        <taxon>Viruses</taxon>
        <taxon>Riboviria</taxon>
        <taxon>Orthornavirae</taxon>
        <taxon>Duplornaviricota</taxon>
        <taxon>Resentoviricetes</taxon>
        <taxon>Reovirales</taxon>
        <taxon>Spinareoviridae</taxon>
        <taxon>Oryzavirus</taxon>
        <taxon>Rice ragged stunt virus</taxon>
    </lineage>
</organism>